<protein>
    <recommendedName>
        <fullName>Uracil phosphoribosyltransferase</fullName>
        <shortName>UPRTase</shortName>
        <ecNumber evidence="3 4">2.4.2.9</ecNumber>
    </recommendedName>
    <alternativeName>
        <fullName>UMP pyrophosphorylase</fullName>
    </alternativeName>
</protein>
<accession>P18562</accession>
<accession>D3DL77</accession>
<organism>
    <name type="scientific">Saccharomyces cerevisiae (strain ATCC 204508 / S288c)</name>
    <name type="common">Baker's yeast</name>
    <dbReference type="NCBI Taxonomy" id="559292"/>
    <lineage>
        <taxon>Eukaryota</taxon>
        <taxon>Fungi</taxon>
        <taxon>Dikarya</taxon>
        <taxon>Ascomycota</taxon>
        <taxon>Saccharomycotina</taxon>
        <taxon>Saccharomycetes</taxon>
        <taxon>Saccharomycetales</taxon>
        <taxon>Saccharomycetaceae</taxon>
        <taxon>Saccharomyces</taxon>
    </lineage>
</organism>
<feature type="chain" id="PRO_0000120788" description="Uracil phosphoribosyltransferase">
    <location>
        <begin position="1"/>
        <end position="216"/>
    </location>
</feature>
<feature type="binding site" evidence="2">
    <location>
        <position position="32"/>
    </location>
    <ligand>
        <name>GTP</name>
        <dbReference type="ChEBI" id="CHEBI:37565"/>
    </ligand>
</feature>
<feature type="binding site" evidence="2">
    <location>
        <position position="41"/>
    </location>
    <ligand>
        <name>GTP</name>
        <dbReference type="ChEBI" id="CHEBI:37565"/>
    </ligand>
</feature>
<feature type="binding site" evidence="2">
    <location>
        <begin position="75"/>
        <end position="78"/>
    </location>
    <ligand>
        <name>GTP</name>
        <dbReference type="ChEBI" id="CHEBI:37565"/>
    </ligand>
</feature>
<feature type="binding site" evidence="1">
    <location>
        <position position="77"/>
    </location>
    <ligand>
        <name>GTP</name>
        <dbReference type="ChEBI" id="CHEBI:37565"/>
    </ligand>
</feature>
<feature type="binding site" evidence="2">
    <location>
        <position position="85"/>
    </location>
    <ligand>
        <name>5-phospho-alpha-D-ribose 1-diphosphate</name>
        <dbReference type="ChEBI" id="CHEBI:58017"/>
    </ligand>
</feature>
<feature type="binding site" evidence="2">
    <location>
        <position position="102"/>
    </location>
    <ligand>
        <name>GTP</name>
        <dbReference type="ChEBI" id="CHEBI:37565"/>
    </ligand>
</feature>
<feature type="binding site" evidence="2">
    <location>
        <position position="110"/>
    </location>
    <ligand>
        <name>5-phospho-alpha-D-ribose 1-diphosphate</name>
        <dbReference type="ChEBI" id="CHEBI:58017"/>
    </ligand>
</feature>
<feature type="binding site" evidence="2">
    <location>
        <position position="131"/>
    </location>
    <ligand>
        <name>GTP</name>
        <dbReference type="ChEBI" id="CHEBI:37565"/>
    </ligand>
</feature>
<feature type="binding site" evidence="2">
    <location>
        <begin position="137"/>
        <end position="145"/>
    </location>
    <ligand>
        <name>5-phospho-alpha-D-ribose 1-diphosphate</name>
        <dbReference type="ChEBI" id="CHEBI:58017"/>
    </ligand>
</feature>
<feature type="binding site" evidence="2">
    <location>
        <position position="137"/>
    </location>
    <ligand>
        <name>5-phospho-alpha-D-ribose 1-diphosphate</name>
        <dbReference type="ChEBI" id="CHEBI:58017"/>
    </ligand>
</feature>
<feature type="binding site" evidence="1">
    <location>
        <position position="201"/>
    </location>
    <ligand>
        <name>D-ribose 5-phosphate</name>
        <dbReference type="ChEBI" id="CHEBI:78346"/>
    </ligand>
</feature>
<feature type="binding site" evidence="2">
    <location>
        <position position="202"/>
    </location>
    <ligand>
        <name>uracil</name>
        <dbReference type="ChEBI" id="CHEBI:17568"/>
    </ligand>
</feature>
<feature type="binding site" evidence="2">
    <location>
        <begin position="207"/>
        <end position="209"/>
    </location>
    <ligand>
        <name>uracil</name>
        <dbReference type="ChEBI" id="CHEBI:17568"/>
    </ligand>
</feature>
<feature type="binding site" evidence="1">
    <location>
        <position position="208"/>
    </location>
    <ligand>
        <name>5-phospho-alpha-D-ribose 1-diphosphate</name>
        <dbReference type="ChEBI" id="CHEBI:58017"/>
    </ligand>
</feature>
<feature type="modified residue" description="Phosphoserine" evidence="7">
    <location>
        <position position="82"/>
    </location>
</feature>
<feature type="mutagenesis site" description="In FUR1-8; causes resistance to 5-fluorouracil (5FU)." evidence="4">
    <original>R</original>
    <variation>S</variation>
    <location>
        <position position="26"/>
    </location>
</feature>
<feature type="mutagenesis site" description="In FUR1-5; causes resistance to 5-fluorouracil (5FU)." evidence="3">
    <original>R</original>
    <variation>S</variation>
    <location>
        <position position="99"/>
    </location>
</feature>
<feature type="mutagenesis site" description="In FUR1-7; causes resistance to 5-fluorouracil (5FU)." evidence="4">
    <original>I</original>
    <variation>N</variation>
    <location>
        <position position="106"/>
    </location>
</feature>
<feature type="mutagenesis site" description="In FUR1-9; causes resistance to 5-fluorouracil (5FU)." evidence="4">
    <original>E</original>
    <variation>G</variation>
    <location>
        <position position="173"/>
    </location>
</feature>
<feature type="sequence conflict" description="In Ref. 2; AAB19947." evidence="5" ref="2">
    <location>
        <position position="104"/>
    </location>
</feature>
<name>UPP_YEAST</name>
<keyword id="KW-0021">Allosteric enzyme</keyword>
<keyword id="KW-0328">Glycosyltransferase</keyword>
<keyword id="KW-0342">GTP-binding</keyword>
<keyword id="KW-0547">Nucleotide-binding</keyword>
<keyword id="KW-0597">Phosphoprotein</keyword>
<keyword id="KW-1185">Reference proteome</keyword>
<keyword id="KW-0808">Transferase</keyword>
<dbReference type="EC" id="2.4.2.9" evidence="3 4"/>
<dbReference type="EMBL" id="M36485">
    <property type="protein sequence ID" value="AAA34611.1"/>
    <property type="status" value="ALT_INIT"/>
    <property type="molecule type" value="Genomic_DNA"/>
</dbReference>
<dbReference type="EMBL" id="S57516">
    <property type="protein sequence ID" value="AAB19947.2"/>
    <property type="status" value="ALT_INIT"/>
    <property type="molecule type" value="Genomic_DNA"/>
</dbReference>
<dbReference type="EMBL" id="X79811">
    <property type="protein sequence ID" value="CAA56207.1"/>
    <property type="status" value="ALT_INIT"/>
    <property type="molecule type" value="Genomic_DNA"/>
</dbReference>
<dbReference type="EMBL" id="U10398">
    <property type="protein sequence ID" value="AAB68405.1"/>
    <property type="status" value="ALT_INIT"/>
    <property type="molecule type" value="Genomic_DNA"/>
</dbReference>
<dbReference type="EMBL" id="AY693082">
    <property type="protein sequence ID" value="AAT93101.1"/>
    <property type="status" value="ALT_INIT"/>
    <property type="molecule type" value="Genomic_DNA"/>
</dbReference>
<dbReference type="EMBL" id="BK006934">
    <property type="protein sequence ID" value="DAA06821.1"/>
    <property type="molecule type" value="Genomic_DNA"/>
</dbReference>
<dbReference type="PIR" id="JH0147">
    <property type="entry name" value="JH0147"/>
</dbReference>
<dbReference type="RefSeq" id="NP_011996.2">
    <property type="nucleotide sequence ID" value="NM_001179258.1"/>
</dbReference>
<dbReference type="SMR" id="P18562"/>
<dbReference type="BioGRID" id="36561">
    <property type="interactions" value="75"/>
</dbReference>
<dbReference type="DIP" id="DIP-1323N"/>
<dbReference type="FunCoup" id="P18562">
    <property type="interactions" value="908"/>
</dbReference>
<dbReference type="IntAct" id="P18562">
    <property type="interactions" value="18"/>
</dbReference>
<dbReference type="MINT" id="P18562"/>
<dbReference type="STRING" id="4932.YHR128W"/>
<dbReference type="iPTMnet" id="P18562"/>
<dbReference type="PaxDb" id="4932-YHR128W"/>
<dbReference type="PeptideAtlas" id="P18562"/>
<dbReference type="TopDownProteomics" id="P18562"/>
<dbReference type="EnsemblFungi" id="YHR128W_mRNA">
    <property type="protein sequence ID" value="YHR128W"/>
    <property type="gene ID" value="YHR128W"/>
</dbReference>
<dbReference type="GeneID" id="856529"/>
<dbReference type="KEGG" id="sce:YHR128W"/>
<dbReference type="AGR" id="SGD:S000001170"/>
<dbReference type="SGD" id="S000001170">
    <property type="gene designation" value="FUR1"/>
</dbReference>
<dbReference type="VEuPathDB" id="FungiDB:YHR128W"/>
<dbReference type="eggNOG" id="KOG4203">
    <property type="taxonomic scope" value="Eukaryota"/>
</dbReference>
<dbReference type="GeneTree" id="ENSGT01020000230412"/>
<dbReference type="HOGENOM" id="CLU_067096_1_1_1"/>
<dbReference type="InParanoid" id="P18562"/>
<dbReference type="OMA" id="KHKIGLM"/>
<dbReference type="OrthoDB" id="106623at2759"/>
<dbReference type="BioCyc" id="MetaCyc:YHR128W-MONOMER"/>
<dbReference type="BioCyc" id="YEAST:YHR128W-MONOMER"/>
<dbReference type="UniPathway" id="UPA00574">
    <property type="reaction ID" value="UER00636"/>
</dbReference>
<dbReference type="BioGRID-ORCS" id="856529">
    <property type="hits" value="2 hits in 10 CRISPR screens"/>
</dbReference>
<dbReference type="PRO" id="PR:P18562"/>
<dbReference type="Proteomes" id="UP000002311">
    <property type="component" value="Chromosome VIII"/>
</dbReference>
<dbReference type="RNAct" id="P18562">
    <property type="molecule type" value="protein"/>
</dbReference>
<dbReference type="GO" id="GO:0005737">
    <property type="term" value="C:cytoplasm"/>
    <property type="evidence" value="ECO:0000305"/>
    <property type="project" value="SGD"/>
</dbReference>
<dbReference type="GO" id="GO:0005525">
    <property type="term" value="F:GTP binding"/>
    <property type="evidence" value="ECO:0007669"/>
    <property type="project" value="UniProtKB-KW"/>
</dbReference>
<dbReference type="GO" id="GO:0004845">
    <property type="term" value="F:uracil phosphoribosyltransferase activity"/>
    <property type="evidence" value="ECO:0000314"/>
    <property type="project" value="SGD"/>
</dbReference>
<dbReference type="GO" id="GO:0008655">
    <property type="term" value="P:pyrimidine-containing compound salvage"/>
    <property type="evidence" value="ECO:0000314"/>
    <property type="project" value="SGD"/>
</dbReference>
<dbReference type="GO" id="GO:0044206">
    <property type="term" value="P:UMP salvage"/>
    <property type="evidence" value="ECO:0007669"/>
    <property type="project" value="UniProtKB-UniPathway"/>
</dbReference>
<dbReference type="CDD" id="cd06223">
    <property type="entry name" value="PRTases_typeI"/>
    <property type="match status" value="1"/>
</dbReference>
<dbReference type="FunFam" id="3.40.50.2020:FF:000023">
    <property type="entry name" value="Probable uracil phosphoribosyltransferase"/>
    <property type="match status" value="1"/>
</dbReference>
<dbReference type="Gene3D" id="3.40.50.2020">
    <property type="match status" value="1"/>
</dbReference>
<dbReference type="InterPro" id="IPR000836">
    <property type="entry name" value="PRibTrfase_dom"/>
</dbReference>
<dbReference type="InterPro" id="IPR029057">
    <property type="entry name" value="PRTase-like"/>
</dbReference>
<dbReference type="NCBIfam" id="NF001097">
    <property type="entry name" value="PRK00129.1"/>
    <property type="match status" value="1"/>
</dbReference>
<dbReference type="Pfam" id="PF14681">
    <property type="entry name" value="UPRTase"/>
    <property type="match status" value="1"/>
</dbReference>
<dbReference type="SUPFAM" id="SSF53271">
    <property type="entry name" value="PRTase-like"/>
    <property type="match status" value="1"/>
</dbReference>
<proteinExistence type="evidence at protein level"/>
<comment type="function">
    <text evidence="3 4">Catalyzes the conversion of uracil and 5-phospho-alpha-D-ribose 1-diphosphate (PRPP) to UMP and diphosphate in the pyrimidine salvage pathway.</text>
</comment>
<comment type="catalytic activity">
    <reaction evidence="3 4">
        <text>UMP + diphosphate = 5-phospho-alpha-D-ribose 1-diphosphate + uracil</text>
        <dbReference type="Rhea" id="RHEA:13017"/>
        <dbReference type="ChEBI" id="CHEBI:17568"/>
        <dbReference type="ChEBI" id="CHEBI:33019"/>
        <dbReference type="ChEBI" id="CHEBI:57865"/>
        <dbReference type="ChEBI" id="CHEBI:58017"/>
        <dbReference type="EC" id="2.4.2.9"/>
    </reaction>
    <physiologicalReaction direction="right-to-left" evidence="6">
        <dbReference type="Rhea" id="RHEA:13019"/>
    </physiologicalReaction>
</comment>
<comment type="cofactor">
    <cofactor evidence="1">
        <name>Mg(2+)</name>
        <dbReference type="ChEBI" id="CHEBI:18420"/>
    </cofactor>
    <text evidence="1">Binds 1 Mg(2+) ion per subunit. The magnesium is bound as Mg-PRPP.</text>
</comment>
<comment type="activity regulation">
    <text evidence="1">Allosterically activated by GTP.</text>
</comment>
<comment type="pathway">
    <text evidence="6">Pyrimidine metabolism; UMP biosynthesis via salvage pathway; UMP from uracil: step 1/1.</text>
</comment>
<comment type="interaction">
    <interactant intactId="EBI-20122">
        <id>P18562</id>
    </interactant>
    <interactant intactId="EBI-20151">
        <id>P27515</id>
        <label>URK1</label>
    </interactant>
    <organismsDiffer>false</organismsDiffer>
    <experiments>4</experiments>
</comment>
<comment type="induction">
    <text evidence="3">Induced by uracil.</text>
</comment>
<comment type="similarity">
    <text evidence="5">Belongs to the UPRTase family.</text>
</comment>
<comment type="sequence caution" evidence="5">
    <conflict type="erroneous initiation">
        <sequence resource="EMBL-CDS" id="AAA34611"/>
    </conflict>
    <text>Extended N-terminus.</text>
</comment>
<comment type="sequence caution" evidence="5">
    <conflict type="erroneous initiation">
        <sequence resource="EMBL-CDS" id="AAB19947"/>
    </conflict>
    <text>Extended N-terminus.</text>
</comment>
<comment type="sequence caution" evidence="5">
    <conflict type="erroneous initiation">
        <sequence resource="EMBL-CDS" id="AAB68405"/>
    </conflict>
    <text>Extended N-terminus.</text>
</comment>
<comment type="sequence caution" evidence="5">
    <conflict type="erroneous initiation">
        <sequence resource="EMBL-CDS" id="AAT93101"/>
    </conflict>
    <text>Extended N-terminus.</text>
</comment>
<comment type="sequence caution" evidence="5">
    <conflict type="erroneous initiation">
        <sequence resource="EMBL-CDS" id="CAA56207"/>
    </conflict>
    <text>Extended N-terminus.</text>
</comment>
<evidence type="ECO:0000250" key="1"/>
<evidence type="ECO:0000250" key="2">
    <source>
        <dbReference type="UniProtKB" id="Q26998"/>
    </source>
</evidence>
<evidence type="ECO:0000269" key="3">
    <source>
    </source>
</evidence>
<evidence type="ECO:0000269" key="4">
    <source>
    </source>
</evidence>
<evidence type="ECO:0000305" key="5"/>
<evidence type="ECO:0000305" key="6">
    <source>
    </source>
</evidence>
<evidence type="ECO:0007744" key="7">
    <source>
    </source>
</evidence>
<sequence length="216" mass="24594">MSSEPFKNVYLLPQTNQLLGLYTIIRNKNTTRPDFIFYSDRIIRLLVEEGLNHLPVQKQIVETDTNENFEGVSFMGKICGVSIVRAGESMEQGLRDCCRSVRIGKILIQRDEETALPKLFYEKLPEDISERYVFLLDPMLATGGSAIMATEVLIKRGVKPERIYFLNLICSKEGIEKYHAAFPEVRIVTGALDRGLDENKYLVPGLGDFGDRYYCV</sequence>
<reference key="1">
    <citation type="journal article" date="1990" name="Gene">
        <title>The FUR1 gene of Saccharomyces cerevisiae: cloning, structure and expression of wild-type and mutant alleles.</title>
        <authorList>
            <person name="Kern L."/>
            <person name="de Montigny J."/>
            <person name="Jund R."/>
            <person name="Lacroute F."/>
        </authorList>
    </citation>
    <scope>NUCLEOTIDE SEQUENCE [GENOMIC DNA]</scope>
    <scope>FUNCTION</scope>
    <scope>CATALYTIC ACTIVITY</scope>
    <scope>MUTAGENESIS OF ARG-26; ILE-106 AND GLU-173</scope>
    <source>
        <strain>ATCC 28383 / FL100 / VTT C-80102</strain>
    </source>
</reference>
<reference key="2">
    <citation type="journal article" date="1991" name="Curr. Genet.">
        <title>Regulation of the pyrimidine salvage pathway by the FUR1 gene product of Saccharomyces cerevisiae.</title>
        <authorList>
            <person name="Kern L."/>
            <person name="de Montigny J."/>
            <person name="Lacroute F."/>
            <person name="Jund R."/>
        </authorList>
    </citation>
    <scope>NUCLEOTIDE SEQUENCE [GENOMIC DNA]</scope>
    <scope>FUNCTION</scope>
    <scope>MUTAGENESIS OF ARG-99</scope>
    <scope>INDUCTION</scope>
</reference>
<reference key="3">
    <citation type="journal article" date="1994" name="J. Cell Biol.">
        <title>ACT3: a putative centractin homologue in S. cerevisiae is required for proper orientation of the mitotic spindle.</title>
        <authorList>
            <person name="Clark S.W."/>
            <person name="Meyer D.I."/>
        </authorList>
    </citation>
    <scope>NUCLEOTIDE SEQUENCE [GENOMIC DNA]</scope>
    <source>
        <strain>ATCC 26109 / X2180 / NCYC 826</strain>
    </source>
</reference>
<reference key="4">
    <citation type="journal article" date="1994" name="Science">
        <title>Complete nucleotide sequence of Saccharomyces cerevisiae chromosome VIII.</title>
        <authorList>
            <person name="Johnston M."/>
            <person name="Andrews S."/>
            <person name="Brinkman R."/>
            <person name="Cooper J."/>
            <person name="Ding H."/>
            <person name="Dover J."/>
            <person name="Du Z."/>
            <person name="Favello A."/>
            <person name="Fulton L."/>
            <person name="Gattung S."/>
            <person name="Geisel C."/>
            <person name="Kirsten J."/>
            <person name="Kucaba T."/>
            <person name="Hillier L.W."/>
            <person name="Jier M."/>
            <person name="Johnston L."/>
            <person name="Langston Y."/>
            <person name="Latreille P."/>
            <person name="Louis E.J."/>
            <person name="Macri C."/>
            <person name="Mardis E."/>
            <person name="Menezes S."/>
            <person name="Mouser L."/>
            <person name="Nhan M."/>
            <person name="Rifkin L."/>
            <person name="Riles L."/>
            <person name="St Peter H."/>
            <person name="Trevaskis E."/>
            <person name="Vaughan K."/>
            <person name="Vignati D."/>
            <person name="Wilcox L."/>
            <person name="Wohldman P."/>
            <person name="Waterston R."/>
            <person name="Wilson R."/>
            <person name="Vaudin M."/>
        </authorList>
    </citation>
    <scope>NUCLEOTIDE SEQUENCE [LARGE SCALE GENOMIC DNA]</scope>
    <source>
        <strain>ATCC 204508 / S288c</strain>
    </source>
</reference>
<reference key="5">
    <citation type="journal article" date="2014" name="G3 (Bethesda)">
        <title>The reference genome sequence of Saccharomyces cerevisiae: Then and now.</title>
        <authorList>
            <person name="Engel S.R."/>
            <person name="Dietrich F.S."/>
            <person name="Fisk D.G."/>
            <person name="Binkley G."/>
            <person name="Balakrishnan R."/>
            <person name="Costanzo M.C."/>
            <person name="Dwight S.S."/>
            <person name="Hitz B.C."/>
            <person name="Karra K."/>
            <person name="Nash R.S."/>
            <person name="Weng S."/>
            <person name="Wong E.D."/>
            <person name="Lloyd P."/>
            <person name="Skrzypek M.S."/>
            <person name="Miyasato S.R."/>
            <person name="Simison M."/>
            <person name="Cherry J.M."/>
        </authorList>
    </citation>
    <scope>GENOME REANNOTATION</scope>
    <source>
        <strain>ATCC 204508 / S288c</strain>
    </source>
</reference>
<reference key="6">
    <citation type="journal article" date="2007" name="Genome Res.">
        <title>Approaching a complete repository of sequence-verified protein-encoding clones for Saccharomyces cerevisiae.</title>
        <authorList>
            <person name="Hu Y."/>
            <person name="Rolfs A."/>
            <person name="Bhullar B."/>
            <person name="Murthy T.V.S."/>
            <person name="Zhu C."/>
            <person name="Berger M.F."/>
            <person name="Camargo A.A."/>
            <person name="Kelley F."/>
            <person name="McCarron S."/>
            <person name="Jepson D."/>
            <person name="Richardson A."/>
            <person name="Raphael J."/>
            <person name="Moreira D."/>
            <person name="Taycher E."/>
            <person name="Zuo D."/>
            <person name="Mohr S."/>
            <person name="Kane M.F."/>
            <person name="Williamson J."/>
            <person name="Simpson A.J.G."/>
            <person name="Bulyk M.L."/>
            <person name="Harlow E."/>
            <person name="Marsischky G."/>
            <person name="Kolodner R.D."/>
            <person name="LaBaer J."/>
        </authorList>
    </citation>
    <scope>NUCLEOTIDE SEQUENCE [GENOMIC DNA]</scope>
    <source>
        <strain>ATCC 204508 / S288c</strain>
    </source>
</reference>
<reference key="7">
    <citation type="journal article" date="2003" name="Nature">
        <title>Sequencing and comparison of yeast species to identify genes and regulatory elements.</title>
        <authorList>
            <person name="Kellis M."/>
            <person name="Patterson N."/>
            <person name="Endrizzi M."/>
            <person name="Birren B.W."/>
            <person name="Lander E.S."/>
        </authorList>
    </citation>
    <scope>IDENTIFICATION OF PROBABLE INITIATION SITE</scope>
</reference>
<reference key="8">
    <citation type="journal article" date="2007" name="Proc. Natl. Acad. Sci. U.S.A.">
        <title>Analysis of phosphorylation sites on proteins from Saccharomyces cerevisiae by electron transfer dissociation (ETD) mass spectrometry.</title>
        <authorList>
            <person name="Chi A."/>
            <person name="Huttenhower C."/>
            <person name="Geer L.Y."/>
            <person name="Coon J.J."/>
            <person name="Syka J.E.P."/>
            <person name="Bai D.L."/>
            <person name="Shabanowitz J."/>
            <person name="Burke D.J."/>
            <person name="Troyanskaya O.G."/>
            <person name="Hunt D.F."/>
        </authorList>
    </citation>
    <scope>PHOSPHORYLATION [LARGE SCALE ANALYSIS] AT SER-82</scope>
    <scope>IDENTIFICATION BY MASS SPECTROMETRY [LARGE SCALE ANALYSIS]</scope>
</reference>
<gene>
    <name type="primary">FUR1</name>
    <name type="ordered locus">YHR128W</name>
</gene>